<comment type="function">
    <text evidence="1 5 6">Heterodimer CA-CB: Crotoxin is a potent presynaptic neurotoxin that possesses phospholipase A2 (PLA2) activity and exerts a lethal action by blocking neuromuscular transmission (PubMed:16003952, PubMed:17203389). It consists of a non-covalent association of a basic and weakly toxic PLA2 subunit (CB), with a small acidic, non-enzymatic and non-toxic subunit (CA also named crotapotin). The complex acts by binding to a specific 48-kDa protein (R48) receptor located on presynaptic membranes, forming a transient ternary complex CA-CB-R48, followed by dissociation of the CA-CB complex and release of the CA subunit. At equilibrium, only the CB subunits remain associated with the specific crotoxin receptor. In addition to neurotoxicity, crotoxin has been found to exert nephrotoxicity, and cardiovascular toxicity. Moreover, anti-inflammatory, immunomodulatory, anti-tumor and analgesic effects of crotoxin have also been reported (By similarity).</text>
</comment>
<comment type="function">
    <text evidence="1 5 6 7">Monomer CB: The basic subunit of crotoxin is a snake venom phospholipase A2 (PLA2) that exhibits weak neurotoxicity (PubMed:17203389, PubMed:16003952) and strong anticoagulant effects by binding to factor Xa (F10) and inhibiting the prothrombinase activity (By similarity). In addition, it exerts myotoxicity (PubMed:17203389, PubMed:16003952, PubMed:17915277), nephrotoxicity, and cardiovascular toxicity as well as anti-inflammatory, immunomodulatory, anti-tumor and analgesic effects (By similarity). Also shows a strong antimicrobial activity against X.axonopodis passiforae (Gram-negative) which is completely dependent on the enzymatic activity (PubMed:16003952). PLA2 catalyzes the calcium-dependent hydrolysis of the 2- acyl groups in 3-sn-phosphoglycerides.</text>
</comment>
<comment type="catalytic activity">
    <reaction evidence="3 4">
        <text>a 1,2-diacyl-sn-glycero-3-phosphocholine + H2O = a 1-acyl-sn-glycero-3-phosphocholine + a fatty acid + H(+)</text>
        <dbReference type="Rhea" id="RHEA:15801"/>
        <dbReference type="ChEBI" id="CHEBI:15377"/>
        <dbReference type="ChEBI" id="CHEBI:15378"/>
        <dbReference type="ChEBI" id="CHEBI:28868"/>
        <dbReference type="ChEBI" id="CHEBI:57643"/>
        <dbReference type="ChEBI" id="CHEBI:58168"/>
        <dbReference type="EC" id="3.1.1.4"/>
    </reaction>
</comment>
<comment type="cofactor">
    <cofactor evidence="1">
        <name>Ca(2+)</name>
        <dbReference type="ChEBI" id="CHEBI:29108"/>
    </cofactor>
    <text evidence="1">Binds 1 Ca(2+) ion.</text>
</comment>
<comment type="subunit">
    <text evidence="6">Heterodimer of one acidic (CA also named crotapotin) and one basic (CB) subunits; non-covalently linked.</text>
</comment>
<comment type="subcellular location">
    <subcellularLocation>
        <location>Secreted</location>
    </subcellularLocation>
</comment>
<comment type="tissue specificity">
    <text>Expressed by the venom gland.</text>
</comment>
<comment type="mass spectrometry" mass="14943.14" method="MALDI" evidence="6"/>
<comment type="similarity">
    <text evidence="10">Belongs to the phospholipase A2 family. Group II subfamily. D49 sub-subfamily.</text>
</comment>
<sequence length="122" mass="14264">HLLQFNKMIKFETRRNAIPPYAFYGCYCGWGGRGRPKDATDRCCFVHDCCYGKLAKCNTKWDFYRYSLKSGYITCGKGTWCEEQICECDRVAAECLRRSLSTYRYGYMIYPDSRCRGPSETC</sequence>
<keyword id="KW-0106">Calcium</keyword>
<keyword id="KW-0903">Direct protein sequencing</keyword>
<keyword id="KW-1015">Disulfide bond</keyword>
<keyword id="KW-0378">Hydrolase</keyword>
<keyword id="KW-0442">Lipid degradation</keyword>
<keyword id="KW-0443">Lipid metabolism</keyword>
<keyword id="KW-0479">Metal-binding</keyword>
<keyword id="KW-0528">Neurotoxin</keyword>
<keyword id="KW-0638">Presynaptic neurotoxin</keyword>
<keyword id="KW-0964">Secreted</keyword>
<keyword id="KW-0800">Toxin</keyword>
<dbReference type="EC" id="3.1.1.4"/>
<dbReference type="SMR" id="P0CAS2"/>
<dbReference type="GO" id="GO:0005576">
    <property type="term" value="C:extracellular region"/>
    <property type="evidence" value="ECO:0007669"/>
    <property type="project" value="UniProtKB-SubCell"/>
</dbReference>
<dbReference type="GO" id="GO:0005509">
    <property type="term" value="F:calcium ion binding"/>
    <property type="evidence" value="ECO:0007669"/>
    <property type="project" value="InterPro"/>
</dbReference>
<dbReference type="GO" id="GO:0047498">
    <property type="term" value="F:calcium-dependent phospholipase A2 activity"/>
    <property type="evidence" value="ECO:0007669"/>
    <property type="project" value="TreeGrafter"/>
</dbReference>
<dbReference type="GO" id="GO:0005543">
    <property type="term" value="F:phospholipid binding"/>
    <property type="evidence" value="ECO:0007669"/>
    <property type="project" value="TreeGrafter"/>
</dbReference>
<dbReference type="GO" id="GO:0090729">
    <property type="term" value="F:toxin activity"/>
    <property type="evidence" value="ECO:0007669"/>
    <property type="project" value="UniProtKB-KW"/>
</dbReference>
<dbReference type="GO" id="GO:0050482">
    <property type="term" value="P:arachidonate secretion"/>
    <property type="evidence" value="ECO:0007669"/>
    <property type="project" value="InterPro"/>
</dbReference>
<dbReference type="GO" id="GO:0016042">
    <property type="term" value="P:lipid catabolic process"/>
    <property type="evidence" value="ECO:0007669"/>
    <property type="project" value="UniProtKB-KW"/>
</dbReference>
<dbReference type="GO" id="GO:0042130">
    <property type="term" value="P:negative regulation of T cell proliferation"/>
    <property type="evidence" value="ECO:0007669"/>
    <property type="project" value="TreeGrafter"/>
</dbReference>
<dbReference type="GO" id="GO:0006644">
    <property type="term" value="P:phospholipid metabolic process"/>
    <property type="evidence" value="ECO:0007669"/>
    <property type="project" value="InterPro"/>
</dbReference>
<dbReference type="CDD" id="cd00125">
    <property type="entry name" value="PLA2c"/>
    <property type="match status" value="1"/>
</dbReference>
<dbReference type="FunFam" id="1.20.90.10:FF:000001">
    <property type="entry name" value="Basic phospholipase A2 homolog"/>
    <property type="match status" value="1"/>
</dbReference>
<dbReference type="Gene3D" id="1.20.90.10">
    <property type="entry name" value="Phospholipase A2 domain"/>
    <property type="match status" value="1"/>
</dbReference>
<dbReference type="InterPro" id="IPR001211">
    <property type="entry name" value="PLipase_A2"/>
</dbReference>
<dbReference type="InterPro" id="IPR033112">
    <property type="entry name" value="PLipase_A2_Asp_AS"/>
</dbReference>
<dbReference type="InterPro" id="IPR016090">
    <property type="entry name" value="PLipase_A2_dom"/>
</dbReference>
<dbReference type="InterPro" id="IPR036444">
    <property type="entry name" value="PLipase_A2_dom_sf"/>
</dbReference>
<dbReference type="InterPro" id="IPR033113">
    <property type="entry name" value="PLipase_A2_His_AS"/>
</dbReference>
<dbReference type="PANTHER" id="PTHR11716">
    <property type="entry name" value="PHOSPHOLIPASE A2 FAMILY MEMBER"/>
    <property type="match status" value="1"/>
</dbReference>
<dbReference type="PANTHER" id="PTHR11716:SF9">
    <property type="entry name" value="PHOSPHOLIPASE A2, MEMBRANE ASSOCIATED"/>
    <property type="match status" value="1"/>
</dbReference>
<dbReference type="Pfam" id="PF00068">
    <property type="entry name" value="Phospholip_A2_1"/>
    <property type="match status" value="1"/>
</dbReference>
<dbReference type="PRINTS" id="PR00389">
    <property type="entry name" value="PHPHLIPASEA2"/>
</dbReference>
<dbReference type="SMART" id="SM00085">
    <property type="entry name" value="PA2c"/>
    <property type="match status" value="1"/>
</dbReference>
<dbReference type="SUPFAM" id="SSF48619">
    <property type="entry name" value="Phospholipase A2, PLA2"/>
    <property type="match status" value="1"/>
</dbReference>
<dbReference type="PROSITE" id="PS00119">
    <property type="entry name" value="PA2_ASP"/>
    <property type="match status" value="1"/>
</dbReference>
<dbReference type="PROSITE" id="PS00118">
    <property type="entry name" value="PA2_HIS"/>
    <property type="match status" value="1"/>
</dbReference>
<evidence type="ECO:0000250" key="1"/>
<evidence type="ECO:0000250" key="2">
    <source>
        <dbReference type="UniProtKB" id="P62022"/>
    </source>
</evidence>
<evidence type="ECO:0000255" key="3">
    <source>
        <dbReference type="PROSITE-ProRule" id="PRU10035"/>
    </source>
</evidence>
<evidence type="ECO:0000255" key="4">
    <source>
        <dbReference type="PROSITE-ProRule" id="PRU10036"/>
    </source>
</evidence>
<evidence type="ECO:0000269" key="5">
    <source>
    </source>
</evidence>
<evidence type="ECO:0000269" key="6">
    <source>
    </source>
</evidence>
<evidence type="ECO:0000269" key="7">
    <source>
    </source>
</evidence>
<evidence type="ECO:0000269" key="8">
    <source ref="2"/>
</evidence>
<evidence type="ECO:0000303" key="9">
    <source ref="2"/>
</evidence>
<evidence type="ECO:0000305" key="10"/>
<feature type="chain" id="PRO_0000376919" description="Phospholipase A2 crotoxin basic chain">
    <location>
        <begin position="1"/>
        <end position="122"/>
    </location>
</feature>
<feature type="active site" evidence="2">
    <location>
        <position position="47"/>
    </location>
</feature>
<feature type="active site" evidence="2">
    <location>
        <position position="89"/>
    </location>
</feature>
<feature type="binding site" evidence="2">
    <location>
        <position position="27"/>
    </location>
    <ligand>
        <name>Ca(2+)</name>
        <dbReference type="ChEBI" id="CHEBI:29108"/>
    </ligand>
</feature>
<feature type="binding site" evidence="2">
    <location>
        <position position="29"/>
    </location>
    <ligand>
        <name>Ca(2+)</name>
        <dbReference type="ChEBI" id="CHEBI:29108"/>
    </ligand>
</feature>
<feature type="binding site" evidence="2">
    <location>
        <position position="31"/>
    </location>
    <ligand>
        <name>Ca(2+)</name>
        <dbReference type="ChEBI" id="CHEBI:29108"/>
    </ligand>
</feature>
<feature type="binding site" evidence="2">
    <location>
        <position position="48"/>
    </location>
    <ligand>
        <name>Ca(2+)</name>
        <dbReference type="ChEBI" id="CHEBI:29108"/>
    </ligand>
</feature>
<feature type="disulfide bond" evidence="2">
    <location>
        <begin position="26"/>
        <end position="115"/>
    </location>
</feature>
<feature type="disulfide bond" evidence="2">
    <location>
        <begin position="28"/>
        <end position="44"/>
    </location>
</feature>
<feature type="disulfide bond" evidence="2">
    <location>
        <begin position="43"/>
        <end position="95"/>
    </location>
</feature>
<feature type="disulfide bond" evidence="2">
    <location>
        <begin position="49"/>
        <end position="122"/>
    </location>
</feature>
<feature type="disulfide bond" evidence="2">
    <location>
        <begin position="50"/>
        <end position="88"/>
    </location>
</feature>
<feature type="disulfide bond" evidence="2">
    <location>
        <begin position="57"/>
        <end position="81"/>
    </location>
</feature>
<feature type="disulfide bond" evidence="2">
    <location>
        <begin position="75"/>
        <end position="86"/>
    </location>
</feature>
<feature type="sequence variant" evidence="8">
    <original>R</original>
    <variation>K</variation>
    <location>
        <position position="15"/>
    </location>
</feature>
<feature type="sequence variant" evidence="8">
    <original>P</original>
    <variation>F</variation>
    <location>
        <position position="20"/>
    </location>
</feature>
<organism>
    <name type="scientific">Crotalus durissus collilineatus</name>
    <name type="common">Brazilian rattlesnake</name>
    <dbReference type="NCBI Taxonomy" id="221569"/>
    <lineage>
        <taxon>Eukaryota</taxon>
        <taxon>Metazoa</taxon>
        <taxon>Chordata</taxon>
        <taxon>Craniata</taxon>
        <taxon>Vertebrata</taxon>
        <taxon>Euteleostomi</taxon>
        <taxon>Lepidosauria</taxon>
        <taxon>Squamata</taxon>
        <taxon>Bifurcata</taxon>
        <taxon>Unidentata</taxon>
        <taxon>Episquamata</taxon>
        <taxon>Toxicofera</taxon>
        <taxon>Serpentes</taxon>
        <taxon>Colubroidea</taxon>
        <taxon>Viperidae</taxon>
        <taxon>Crotalinae</taxon>
        <taxon>Crotalus</taxon>
    </lineage>
</organism>
<name>PA2B6_CRODO</name>
<proteinExistence type="evidence at protein level"/>
<reference key="1">
    <citation type="journal article" date="2007" name="Protein J.">
        <title>Biological and structural characterization of crotoxin and new isoform of crotoxin B PLA(2) (F6a) from Crotalus durissus collilineatus snake venom.</title>
        <authorList>
            <person name="Ponce-Soto L.A."/>
            <person name="Lomonte B."/>
            <person name="Rodrigues-Simioni L."/>
            <person name="Novello J.C."/>
            <person name="Marangoni S."/>
        </authorList>
    </citation>
    <scope>PROTEIN SEQUENCE</scope>
    <scope>FUNCTION</scope>
    <scope>SUBUNIT</scope>
    <scope>MASS SPECTROMETRY</scope>
    <source>
        <tissue>Venom</tissue>
    </source>
</reference>
<reference key="2">
    <citation type="submission" date="2016-06" db="UniProtKB">
        <title>Proteome of Crotalus durissus collilineatus venoms: analysis of individual variations.</title>
        <authorList>
            <person name="Oliveira I."/>
            <person name="Boldrini-Franca J."/>
            <person name="Bordon K."/>
            <person name="Cardoso I."/>
            <person name="Pucca M."/>
            <person name="Carone S."/>
            <person name="Zoccal K."/>
            <person name="Frantz F."/>
            <person name="Faccioli L."/>
            <person name="Sampaio S."/>
            <person name="Rosa J."/>
            <person name="Arantes E."/>
        </authorList>
    </citation>
    <scope>PROTEIN SEQUENCE OF 1-60</scope>
    <scope>VARIANTS LYS-15 AND PHE-20</scope>
    <source>
        <tissue evidence="9">Venom</tissue>
    </source>
</reference>
<reference key="3">
    <citation type="journal article" date="2005" name="Protein J.">
        <title>Biological and structural characterization of a new PLA2 from the Crotalus durissus collilineatus venom.</title>
        <authorList>
            <person name="Toyama M.H."/>
            <person name="Toyama D.O."/>
            <person name="Joazeiro P.P."/>
            <person name="Carneiro E.M."/>
            <person name="Beriam L.O."/>
            <person name="Marangoni L.S."/>
            <person name="Boschero A.C."/>
        </authorList>
    </citation>
    <scope>FUNCTION</scope>
</reference>
<reference key="4">
    <citation type="journal article" date="2008" name="Toxicon">
        <title>Systemic and local myotoxicity induced by snake venom group II phospholipases A2: comparison between crotoxin, crotoxin B and a Lys49 PLA2 homologue.</title>
        <authorList>
            <person name="Gutierrez J.M."/>
            <person name="Ponce-Soto L.A."/>
            <person name="Marangoni S."/>
            <person name="Lomonte B."/>
        </authorList>
    </citation>
    <scope>FUNCTION</scope>
</reference>
<reference key="5">
    <citation type="journal article" date="2009" name="Acta Crystallogr. F">
        <title>Crystallization and preliminary X-ray diffraction analysis of crotoxin B from Crotalus durissus collilineatus venom.</title>
        <authorList>
            <person name="Salvador G.H."/>
            <person name="Fernandes C.A."/>
            <person name="Correa L.C."/>
            <person name="Santos-Filho N.A."/>
            <person name="Soares A.M."/>
            <person name="Fontes M.R."/>
        </authorList>
    </citation>
    <scope>X-RAY CRYSTALLOGRAPHY (2.2 ANGSTROMS)</scope>
</reference>
<protein>
    <recommendedName>
        <fullName>Phospholipase A2 crotoxin basic chain</fullName>
        <shortName>CB</shortName>
        <shortName>Crotoxin-B</shortName>
        <shortName>svPLA2</shortName>
        <ecNumber>3.1.1.4</ecNumber>
    </recommendedName>
    <alternativeName>
        <fullName>CdcolF6a</fullName>
        <shortName>F6a</shortName>
    </alternativeName>
    <alternativeName>
        <fullName>Phosphatidylcholine 2-acylhydrolase</fullName>
    </alternativeName>
</protein>
<accession>P0CAS2</accession>